<feature type="chain" id="PRO_0000197289" description="Metallothionein">
    <location>
        <begin position="1"/>
        <end position="60"/>
    </location>
</feature>
<feature type="region of interest" description="Beta">
    <location>
        <begin position="1"/>
        <end position="28"/>
    </location>
</feature>
<feature type="region of interest" description="Alpha">
    <location>
        <begin position="29"/>
        <end position="60"/>
    </location>
</feature>
<feature type="binding site" evidence="2">
    <location>
        <position position="4"/>
    </location>
    <ligand>
        <name>a divalent metal cation</name>
        <dbReference type="ChEBI" id="CHEBI:60240"/>
        <label>1</label>
        <note>in cluster B</note>
    </ligand>
</feature>
<feature type="binding site" evidence="2">
    <location>
        <position position="6"/>
    </location>
    <ligand>
        <name>a divalent metal cation</name>
        <dbReference type="ChEBI" id="CHEBI:60240"/>
        <label>1</label>
        <note>in cluster B</note>
    </ligand>
</feature>
<feature type="binding site" evidence="2">
    <location>
        <position position="6"/>
    </location>
    <ligand>
        <name>a divalent metal cation</name>
        <dbReference type="ChEBI" id="CHEBI:60240"/>
        <label>2</label>
        <note>in cluster B</note>
    </ligand>
</feature>
<feature type="binding site" evidence="2">
    <location>
        <position position="12"/>
    </location>
    <ligand>
        <name>a divalent metal cation</name>
        <dbReference type="ChEBI" id="CHEBI:60240"/>
        <label>2</label>
        <note>in cluster B</note>
    </ligand>
</feature>
<feature type="binding site" evidence="2">
    <location>
        <position position="14"/>
    </location>
    <ligand>
        <name>a divalent metal cation</name>
        <dbReference type="ChEBI" id="CHEBI:60240"/>
        <label>2</label>
        <note>in cluster B</note>
    </ligand>
</feature>
<feature type="binding site" evidence="2">
    <location>
        <position position="14"/>
    </location>
    <ligand>
        <name>a divalent metal cation</name>
        <dbReference type="ChEBI" id="CHEBI:60240"/>
        <label>3</label>
        <note>in cluster B</note>
    </ligand>
</feature>
<feature type="binding site" evidence="2">
    <location>
        <position position="18"/>
    </location>
    <ligand>
        <name>a divalent metal cation</name>
        <dbReference type="ChEBI" id="CHEBI:60240"/>
        <label>3</label>
        <note>in cluster B</note>
    </ligand>
</feature>
<feature type="binding site" evidence="2">
    <location>
        <position position="20"/>
    </location>
    <ligand>
        <name>a divalent metal cation</name>
        <dbReference type="ChEBI" id="CHEBI:60240"/>
        <label>1</label>
        <note>in cluster B</note>
    </ligand>
</feature>
<feature type="binding site" evidence="2">
    <location>
        <position position="23"/>
    </location>
    <ligand>
        <name>a divalent metal cation</name>
        <dbReference type="ChEBI" id="CHEBI:60240"/>
        <label>1</label>
        <note>in cluster B</note>
    </ligand>
</feature>
<feature type="binding site" evidence="2">
    <location>
        <position position="23"/>
    </location>
    <ligand>
        <name>a divalent metal cation</name>
        <dbReference type="ChEBI" id="CHEBI:60240"/>
        <label>3</label>
        <note>in cluster B</note>
    </ligand>
</feature>
<feature type="binding site" evidence="2">
    <location>
        <position position="25"/>
    </location>
    <ligand>
        <name>a divalent metal cation</name>
        <dbReference type="ChEBI" id="CHEBI:60240"/>
        <label>2</label>
        <note>in cluster B</note>
    </ligand>
</feature>
<feature type="binding site" evidence="2">
    <location>
        <position position="28"/>
    </location>
    <ligand>
        <name>a divalent metal cation</name>
        <dbReference type="ChEBI" id="CHEBI:60240"/>
        <label>3</label>
        <note>in cluster B</note>
    </ligand>
</feature>
<feature type="binding site" evidence="2">
    <location>
        <position position="32"/>
    </location>
    <ligand>
        <name>a divalent metal cation</name>
        <dbReference type="ChEBI" id="CHEBI:60240"/>
        <label>4</label>
        <note>in cluster A</note>
    </ligand>
</feature>
<feature type="binding site" evidence="2">
    <location>
        <position position="33"/>
    </location>
    <ligand>
        <name>a divalent metal cation</name>
        <dbReference type="ChEBI" id="CHEBI:60240"/>
        <label>4</label>
        <note>in cluster A</note>
    </ligand>
</feature>
<feature type="binding site" evidence="2">
    <location>
        <position position="33"/>
    </location>
    <ligand>
        <name>a divalent metal cation</name>
        <dbReference type="ChEBI" id="CHEBI:60240"/>
        <label>5</label>
        <note>in cluster A</note>
    </ligand>
</feature>
<feature type="binding site" evidence="2">
    <location>
        <position position="35"/>
    </location>
    <ligand>
        <name>a divalent metal cation</name>
        <dbReference type="ChEBI" id="CHEBI:60240"/>
        <label>5</label>
        <note>in cluster A</note>
    </ligand>
</feature>
<feature type="binding site" evidence="2">
    <location>
        <position position="36"/>
    </location>
    <ligand>
        <name>a divalent metal cation</name>
        <dbReference type="ChEBI" id="CHEBI:60240"/>
        <label>5</label>
        <note>in cluster A</note>
    </ligand>
</feature>
<feature type="binding site" evidence="2">
    <location>
        <position position="36"/>
    </location>
    <ligand>
        <name>a divalent metal cation</name>
        <dbReference type="ChEBI" id="CHEBI:60240"/>
        <label>6</label>
        <note>in cluster A</note>
    </ligand>
</feature>
<feature type="binding site" evidence="2">
    <location>
        <position position="40"/>
    </location>
    <ligand>
        <name>a divalent metal cation</name>
        <dbReference type="ChEBI" id="CHEBI:60240"/>
        <label>6</label>
        <note>in cluster A</note>
    </ligand>
</feature>
<feature type="binding site" evidence="2">
    <location>
        <position position="43"/>
    </location>
    <ligand>
        <name>a divalent metal cation</name>
        <dbReference type="ChEBI" id="CHEBI:60240"/>
        <label>4</label>
        <note>in cluster A</note>
    </ligand>
</feature>
<feature type="binding site" evidence="2">
    <location>
        <position position="43"/>
    </location>
    <ligand>
        <name>a divalent metal cation</name>
        <dbReference type="ChEBI" id="CHEBI:60240"/>
        <label>6</label>
        <note>in cluster A</note>
    </ligand>
</feature>
<feature type="binding site" evidence="2">
    <location>
        <position position="47"/>
    </location>
    <ligand>
        <name>a divalent metal cation</name>
        <dbReference type="ChEBI" id="CHEBI:60240"/>
        <label>4</label>
        <note>in cluster A</note>
    </ligand>
</feature>
<feature type="binding site" evidence="2">
    <location>
        <position position="49"/>
    </location>
    <ligand>
        <name>a divalent metal cation</name>
        <dbReference type="ChEBI" id="CHEBI:60240"/>
        <label>5</label>
        <note>in cluster A</note>
    </ligand>
</feature>
<feature type="binding site" evidence="2">
    <location>
        <position position="49"/>
    </location>
    <ligand>
        <name>a divalent metal cation</name>
        <dbReference type="ChEBI" id="CHEBI:60240"/>
        <label>7</label>
        <note>in cluster A</note>
    </ligand>
</feature>
<feature type="binding site" evidence="3">
    <location>
        <position position="54"/>
    </location>
    <ligand>
        <name>a divalent metal cation</name>
        <dbReference type="ChEBI" id="CHEBI:60240"/>
        <label>7</label>
        <note>in cluster A</note>
    </ligand>
</feature>
<feature type="binding site" evidence="2">
    <location>
        <position position="58"/>
    </location>
    <ligand>
        <name>a divalent metal cation</name>
        <dbReference type="ChEBI" id="CHEBI:60240"/>
        <label>7</label>
        <note>in cluster A</note>
    </ligand>
</feature>
<feature type="binding site" evidence="2">
    <location>
        <position position="59"/>
    </location>
    <ligand>
        <name>a divalent metal cation</name>
        <dbReference type="ChEBI" id="CHEBI:60240"/>
        <label>6</label>
        <note>in cluster A</note>
    </ligand>
</feature>
<feature type="binding site" evidence="2">
    <location>
        <position position="59"/>
    </location>
    <ligand>
        <name>a divalent metal cation</name>
        <dbReference type="ChEBI" id="CHEBI:60240"/>
        <label>7</label>
        <note>in cluster A</note>
    </ligand>
</feature>
<reference key="1">
    <citation type="submission" date="2000-11" db="EMBL/GenBank/DDBJ databases">
        <title>Metallothionein levels in Lithognathus mormyrus liver.</title>
        <authorList>
            <person name="Tom M."/>
        </authorList>
    </citation>
    <scope>NUCLEOTIDE SEQUENCE [MRNA]</scope>
    <source>
        <tissue>Liver</tissue>
    </source>
</reference>
<gene>
    <name type="primary">mt</name>
</gene>
<protein>
    <recommendedName>
        <fullName>Metallothionein</fullName>
        <shortName>MT</shortName>
    </recommendedName>
</protein>
<proteinExistence type="inferred from homology"/>
<evidence type="ECO:0000250" key="1"/>
<evidence type="ECO:0000250" key="2">
    <source>
        <dbReference type="UniProtKB" id="P02795"/>
    </source>
</evidence>
<evidence type="ECO:0000250" key="3">
    <source>
        <dbReference type="UniProtKB" id="P62339"/>
    </source>
</evidence>
<evidence type="ECO:0000305" key="4"/>
<keyword id="KW-0479">Metal-binding</keyword>
<keyword id="KW-0480">Metal-thiolate cluster</keyword>
<organism>
    <name type="scientific">Lithognathus mormyrus</name>
    <name type="common">Striped seabream</name>
    <name type="synonym">Sparus mormyrus</name>
    <dbReference type="NCBI Taxonomy" id="50591"/>
    <lineage>
        <taxon>Eukaryota</taxon>
        <taxon>Metazoa</taxon>
        <taxon>Chordata</taxon>
        <taxon>Craniata</taxon>
        <taxon>Vertebrata</taxon>
        <taxon>Euteleostomi</taxon>
        <taxon>Actinopterygii</taxon>
        <taxon>Neopterygii</taxon>
        <taxon>Teleostei</taxon>
        <taxon>Neoteleostei</taxon>
        <taxon>Acanthomorphata</taxon>
        <taxon>Eupercaria</taxon>
        <taxon>Spariformes</taxon>
        <taxon>Sparidae</taxon>
        <taxon>Lithognathus</taxon>
    </lineage>
</organism>
<name>MT_LITMO</name>
<sequence length="60" mass="5936">MDPCECAKTGTCNCGGSCSCTNCSCTSCKKSCCSCCPAGCSKCASGCVCKGKTCDTSCCQ</sequence>
<accession>Q8UVY1</accession>
<comment type="function">
    <text evidence="1">Metallothioneins have a high content of cysteine residues that bind various heavy metals.</text>
</comment>
<comment type="domain">
    <text>Class I metallothioneins contain 2 metal-binding domains: four divalent ions are chelated within cluster A of the alpha domain and are coordinated via cysteinyl thiolate bridges to 11 cysteine ligands. Cluster B, the corresponding region within the beta domain, can ligate three divalent ions to 9 cysteines.</text>
</comment>
<comment type="similarity">
    <text evidence="4">Belongs to the metallothionein superfamily. Type 1 family.</text>
</comment>
<dbReference type="EMBL" id="AF321007">
    <property type="protein sequence ID" value="AAL37187.1"/>
    <property type="molecule type" value="mRNA"/>
</dbReference>
<dbReference type="SMR" id="Q8UVY1"/>
<dbReference type="GO" id="GO:0046872">
    <property type="term" value="F:metal ion binding"/>
    <property type="evidence" value="ECO:0007669"/>
    <property type="project" value="UniProtKB-KW"/>
</dbReference>
<dbReference type="FunFam" id="4.10.10.10:FF:000001">
    <property type="entry name" value="Metallothionein"/>
    <property type="match status" value="1"/>
</dbReference>
<dbReference type="Gene3D" id="4.10.10.10">
    <property type="entry name" value="Metallothionein Isoform II"/>
    <property type="match status" value="1"/>
</dbReference>
<dbReference type="InterPro" id="IPR017854">
    <property type="entry name" value="Metalthion_dom_sf"/>
</dbReference>
<dbReference type="InterPro" id="IPR023587">
    <property type="entry name" value="Metalthion_dom_sf_vert"/>
</dbReference>
<dbReference type="InterPro" id="IPR000006">
    <property type="entry name" value="Metalthion_vert"/>
</dbReference>
<dbReference type="InterPro" id="IPR018064">
    <property type="entry name" value="Metalthion_vert_metal_BS"/>
</dbReference>
<dbReference type="PANTHER" id="PTHR23299">
    <property type="entry name" value="METALLOTHIONEIN"/>
    <property type="match status" value="1"/>
</dbReference>
<dbReference type="PANTHER" id="PTHR23299:SF24">
    <property type="entry name" value="METALLOTHIONEIN-1X"/>
    <property type="match status" value="1"/>
</dbReference>
<dbReference type="Pfam" id="PF00131">
    <property type="entry name" value="Metallothio"/>
    <property type="match status" value="1"/>
</dbReference>
<dbReference type="PRINTS" id="PR00860">
    <property type="entry name" value="MTVERTEBRATE"/>
</dbReference>
<dbReference type="SUPFAM" id="SSF57868">
    <property type="entry name" value="Metallothionein"/>
    <property type="match status" value="1"/>
</dbReference>
<dbReference type="PROSITE" id="PS00203">
    <property type="entry name" value="METALLOTHIONEIN_VRT"/>
    <property type="match status" value="1"/>
</dbReference>